<organism>
    <name type="scientific">Vibrio cholerae serotype O1 (strain ATCC 39315 / El Tor Inaba N16961)</name>
    <dbReference type="NCBI Taxonomy" id="243277"/>
    <lineage>
        <taxon>Bacteria</taxon>
        <taxon>Pseudomonadati</taxon>
        <taxon>Pseudomonadota</taxon>
        <taxon>Gammaproteobacteria</taxon>
        <taxon>Vibrionales</taxon>
        <taxon>Vibrionaceae</taxon>
        <taxon>Vibrio</taxon>
    </lineage>
</organism>
<evidence type="ECO:0000255" key="1">
    <source>
        <dbReference type="HAMAP-Rule" id="MF_00661"/>
    </source>
</evidence>
<evidence type="ECO:0000256" key="2">
    <source>
        <dbReference type="SAM" id="MobiDB-lite"/>
    </source>
</evidence>
<comment type="function">
    <text evidence="1">DEAD-box RNA helicase involved in RNA degradation. Has RNA-dependent ATPase activity and unwinds double-stranded RNA.</text>
</comment>
<comment type="catalytic activity">
    <reaction evidence="1">
        <text>ATP + H2O = ADP + phosphate + H(+)</text>
        <dbReference type="Rhea" id="RHEA:13065"/>
        <dbReference type="ChEBI" id="CHEBI:15377"/>
        <dbReference type="ChEBI" id="CHEBI:15378"/>
        <dbReference type="ChEBI" id="CHEBI:30616"/>
        <dbReference type="ChEBI" id="CHEBI:43474"/>
        <dbReference type="ChEBI" id="CHEBI:456216"/>
        <dbReference type="EC" id="3.6.4.13"/>
    </reaction>
</comment>
<comment type="subunit">
    <text evidence="1">Component of the RNA degradosome, which is a multiprotein complex involved in RNA processing and mRNA degradation.</text>
</comment>
<comment type="subcellular location">
    <subcellularLocation>
        <location evidence="1">Cytoplasm</location>
    </subcellularLocation>
</comment>
<comment type="similarity">
    <text evidence="1">Belongs to the DEAD box helicase family. RhlB subfamily.</text>
</comment>
<gene>
    <name evidence="1" type="primary">rhlB</name>
    <name type="ordered locus">VC_0305</name>
</gene>
<feature type="chain" id="PRO_0000200786" description="ATP-dependent RNA helicase RhlB">
    <location>
        <begin position="1"/>
        <end position="438"/>
    </location>
</feature>
<feature type="domain" description="Helicase ATP-binding" evidence="1">
    <location>
        <begin position="40"/>
        <end position="219"/>
    </location>
</feature>
<feature type="domain" description="Helicase C-terminal" evidence="1">
    <location>
        <begin position="245"/>
        <end position="390"/>
    </location>
</feature>
<feature type="region of interest" description="Disordered" evidence="2">
    <location>
        <begin position="394"/>
        <end position="438"/>
    </location>
</feature>
<feature type="short sequence motif" description="Q motif">
    <location>
        <begin position="9"/>
        <end position="37"/>
    </location>
</feature>
<feature type="short sequence motif" description="DEAD box">
    <location>
        <begin position="165"/>
        <end position="168"/>
    </location>
</feature>
<feature type="compositionally biased region" description="Low complexity" evidence="2">
    <location>
        <begin position="406"/>
        <end position="423"/>
    </location>
</feature>
<feature type="compositionally biased region" description="Basic residues" evidence="2">
    <location>
        <begin position="424"/>
        <end position="438"/>
    </location>
</feature>
<feature type="binding site" evidence="1">
    <location>
        <begin position="53"/>
        <end position="60"/>
    </location>
    <ligand>
        <name>ATP</name>
        <dbReference type="ChEBI" id="CHEBI:30616"/>
    </ligand>
</feature>
<sequence>MKKTHITEHKFADFGLQPQVIDGLEKKGFVYCTPIQALALPVLLSGQDIAGQAQTGTGKTLAFLTATFNHLLTTPAAEGRAETQPRAIIMAPTRELAIQIFNDAEPLLASTGLKAALAYGGESYDKQLAKLQSGVDILIGTTGRIIDFYKQRVFNLNHIQAVVLDEADRMFDLGFIKDIRFLFRRMPEPKDRLNMLFSATLSYRVQELAFEHMNNPEHVVVEPEQKTGHRIQEELFYPSNEHKMALLQTLIEEEWPDRAIIFANTKHRCEQIWAHLAADNHRVGLLTGDVPQKKRERILEQFTQGDVDILVATDVAARGLHIPQVTHVFNYDLPDDCEDYVHRIGRTGRAGASGHSISFACEEYAINLPAIESYIEHAIPTSDYDPSALLTDLPAPLSLRSSPQQRRTNTAGSRNSNNGGNRKPQQRRPRAPRPKKEA</sequence>
<reference key="1">
    <citation type="journal article" date="2000" name="Nature">
        <title>DNA sequence of both chromosomes of the cholera pathogen Vibrio cholerae.</title>
        <authorList>
            <person name="Heidelberg J.F."/>
            <person name="Eisen J.A."/>
            <person name="Nelson W.C."/>
            <person name="Clayton R.A."/>
            <person name="Gwinn M.L."/>
            <person name="Dodson R.J."/>
            <person name="Haft D.H."/>
            <person name="Hickey E.K."/>
            <person name="Peterson J.D."/>
            <person name="Umayam L.A."/>
            <person name="Gill S.R."/>
            <person name="Nelson K.E."/>
            <person name="Read T.D."/>
            <person name="Tettelin H."/>
            <person name="Richardson D.L."/>
            <person name="Ermolaeva M.D."/>
            <person name="Vamathevan J.J."/>
            <person name="Bass S."/>
            <person name="Qin H."/>
            <person name="Dragoi I."/>
            <person name="Sellers P."/>
            <person name="McDonald L.A."/>
            <person name="Utterback T.R."/>
            <person name="Fleischmann R.D."/>
            <person name="Nierman W.C."/>
            <person name="White O."/>
            <person name="Salzberg S.L."/>
            <person name="Smith H.O."/>
            <person name="Colwell R.R."/>
            <person name="Mekalanos J.J."/>
            <person name="Venter J.C."/>
            <person name="Fraser C.M."/>
        </authorList>
    </citation>
    <scope>NUCLEOTIDE SEQUENCE [LARGE SCALE GENOMIC DNA]</scope>
    <source>
        <strain>ATCC 39315 / El Tor Inaba N16961</strain>
    </source>
</reference>
<accession>Q9KV52</accession>
<dbReference type="EC" id="3.6.4.13" evidence="1"/>
<dbReference type="EMBL" id="AE003852">
    <property type="protein sequence ID" value="AAF93479.1"/>
    <property type="molecule type" value="Genomic_DNA"/>
</dbReference>
<dbReference type="PIR" id="C82340">
    <property type="entry name" value="C82340"/>
</dbReference>
<dbReference type="RefSeq" id="NP_229960.1">
    <property type="nucleotide sequence ID" value="NC_002505.1"/>
</dbReference>
<dbReference type="RefSeq" id="WP_000750771.1">
    <property type="nucleotide sequence ID" value="NZ_LT906614.1"/>
</dbReference>
<dbReference type="SMR" id="Q9KV52"/>
<dbReference type="STRING" id="243277.VC_0305"/>
<dbReference type="DNASU" id="2614975"/>
<dbReference type="EnsemblBacteria" id="AAF93479">
    <property type="protein sequence ID" value="AAF93479"/>
    <property type="gene ID" value="VC_0305"/>
</dbReference>
<dbReference type="GeneID" id="69720972"/>
<dbReference type="KEGG" id="vch:VC_0305"/>
<dbReference type="PATRIC" id="fig|243277.26.peg.286"/>
<dbReference type="eggNOG" id="COG0513">
    <property type="taxonomic scope" value="Bacteria"/>
</dbReference>
<dbReference type="HOGENOM" id="CLU_003041_28_3_6"/>
<dbReference type="Proteomes" id="UP000000584">
    <property type="component" value="Chromosome 1"/>
</dbReference>
<dbReference type="GO" id="GO:0005829">
    <property type="term" value="C:cytosol"/>
    <property type="evidence" value="ECO:0000318"/>
    <property type="project" value="GO_Central"/>
</dbReference>
<dbReference type="GO" id="GO:0005524">
    <property type="term" value="F:ATP binding"/>
    <property type="evidence" value="ECO:0007669"/>
    <property type="project" value="UniProtKB-UniRule"/>
</dbReference>
<dbReference type="GO" id="GO:0016887">
    <property type="term" value="F:ATP hydrolysis activity"/>
    <property type="evidence" value="ECO:0007669"/>
    <property type="project" value="RHEA"/>
</dbReference>
<dbReference type="GO" id="GO:0003723">
    <property type="term" value="F:RNA binding"/>
    <property type="evidence" value="ECO:0007669"/>
    <property type="project" value="UniProtKB-UniRule"/>
</dbReference>
<dbReference type="GO" id="GO:0003724">
    <property type="term" value="F:RNA helicase activity"/>
    <property type="evidence" value="ECO:0000318"/>
    <property type="project" value="GO_Central"/>
</dbReference>
<dbReference type="GO" id="GO:0006401">
    <property type="term" value="P:RNA catabolic process"/>
    <property type="evidence" value="ECO:0007669"/>
    <property type="project" value="UniProtKB-UniRule"/>
</dbReference>
<dbReference type="CDD" id="cd00268">
    <property type="entry name" value="DEADc"/>
    <property type="match status" value="1"/>
</dbReference>
<dbReference type="CDD" id="cd18787">
    <property type="entry name" value="SF2_C_DEAD"/>
    <property type="match status" value="1"/>
</dbReference>
<dbReference type="FunFam" id="3.40.50.300:FF:000008">
    <property type="entry name" value="ATP-dependent RNA helicase RhlB"/>
    <property type="match status" value="1"/>
</dbReference>
<dbReference type="FunFam" id="3.40.50.300:FF:000312">
    <property type="entry name" value="ATP-dependent RNA helicase RhlB"/>
    <property type="match status" value="1"/>
</dbReference>
<dbReference type="Gene3D" id="3.40.50.300">
    <property type="entry name" value="P-loop containing nucleotide triphosphate hydrolases"/>
    <property type="match status" value="2"/>
</dbReference>
<dbReference type="HAMAP" id="MF_00661">
    <property type="entry name" value="DEAD_helicase_RhlB"/>
    <property type="match status" value="1"/>
</dbReference>
<dbReference type="InterPro" id="IPR011545">
    <property type="entry name" value="DEAD/DEAH_box_helicase_dom"/>
</dbReference>
<dbReference type="InterPro" id="IPR050079">
    <property type="entry name" value="DEAD_box_RNA_helicase"/>
</dbReference>
<dbReference type="InterPro" id="IPR014001">
    <property type="entry name" value="Helicase_ATP-bd"/>
</dbReference>
<dbReference type="InterPro" id="IPR001650">
    <property type="entry name" value="Helicase_C-like"/>
</dbReference>
<dbReference type="InterPro" id="IPR027417">
    <property type="entry name" value="P-loop_NTPase"/>
</dbReference>
<dbReference type="InterPro" id="IPR000629">
    <property type="entry name" value="RNA-helicase_DEAD-box_CS"/>
</dbReference>
<dbReference type="InterPro" id="IPR023554">
    <property type="entry name" value="RNA_helicase_ATP-dep_RhlB"/>
</dbReference>
<dbReference type="InterPro" id="IPR014014">
    <property type="entry name" value="RNA_helicase_DEAD_Q_motif"/>
</dbReference>
<dbReference type="NCBIfam" id="NF003419">
    <property type="entry name" value="PRK04837.1"/>
    <property type="match status" value="1"/>
</dbReference>
<dbReference type="PANTHER" id="PTHR47959:SF10">
    <property type="entry name" value="ATP-DEPENDENT RNA HELICASE RHLB"/>
    <property type="match status" value="1"/>
</dbReference>
<dbReference type="PANTHER" id="PTHR47959">
    <property type="entry name" value="ATP-DEPENDENT RNA HELICASE RHLE-RELATED"/>
    <property type="match status" value="1"/>
</dbReference>
<dbReference type="Pfam" id="PF00270">
    <property type="entry name" value="DEAD"/>
    <property type="match status" value="1"/>
</dbReference>
<dbReference type="Pfam" id="PF00271">
    <property type="entry name" value="Helicase_C"/>
    <property type="match status" value="1"/>
</dbReference>
<dbReference type="SMART" id="SM00487">
    <property type="entry name" value="DEXDc"/>
    <property type="match status" value="1"/>
</dbReference>
<dbReference type="SMART" id="SM00490">
    <property type="entry name" value="HELICc"/>
    <property type="match status" value="1"/>
</dbReference>
<dbReference type="SUPFAM" id="SSF52540">
    <property type="entry name" value="P-loop containing nucleoside triphosphate hydrolases"/>
    <property type="match status" value="1"/>
</dbReference>
<dbReference type="PROSITE" id="PS00039">
    <property type="entry name" value="DEAD_ATP_HELICASE"/>
    <property type="match status" value="1"/>
</dbReference>
<dbReference type="PROSITE" id="PS51192">
    <property type="entry name" value="HELICASE_ATP_BIND_1"/>
    <property type="match status" value="1"/>
</dbReference>
<dbReference type="PROSITE" id="PS51194">
    <property type="entry name" value="HELICASE_CTER"/>
    <property type="match status" value="1"/>
</dbReference>
<dbReference type="PROSITE" id="PS51195">
    <property type="entry name" value="Q_MOTIF"/>
    <property type="match status" value="1"/>
</dbReference>
<name>RHLB_VIBCH</name>
<proteinExistence type="inferred from homology"/>
<protein>
    <recommendedName>
        <fullName evidence="1">ATP-dependent RNA helicase RhlB</fullName>
        <ecNumber evidence="1">3.6.4.13</ecNumber>
    </recommendedName>
</protein>
<keyword id="KW-0067">ATP-binding</keyword>
<keyword id="KW-0963">Cytoplasm</keyword>
<keyword id="KW-0347">Helicase</keyword>
<keyword id="KW-0378">Hydrolase</keyword>
<keyword id="KW-0547">Nucleotide-binding</keyword>
<keyword id="KW-1185">Reference proteome</keyword>
<keyword id="KW-0694">RNA-binding</keyword>